<protein>
    <recommendedName>
        <fullName evidence="4">Plant UBX domain-containing protein 10</fullName>
        <shortName evidence="4">PUX10</shortName>
    </recommendedName>
</protein>
<organism>
    <name type="scientific">Arabidopsis thaliana</name>
    <name type="common">Mouse-ear cress</name>
    <dbReference type="NCBI Taxonomy" id="3702"/>
    <lineage>
        <taxon>Eukaryota</taxon>
        <taxon>Viridiplantae</taxon>
        <taxon>Streptophyta</taxon>
        <taxon>Embryophyta</taxon>
        <taxon>Tracheophyta</taxon>
        <taxon>Spermatophyta</taxon>
        <taxon>Magnoliopsida</taxon>
        <taxon>eudicotyledons</taxon>
        <taxon>Gunneridae</taxon>
        <taxon>Pentapetalae</taxon>
        <taxon>rosids</taxon>
        <taxon>malvids</taxon>
        <taxon>Brassicales</taxon>
        <taxon>Brassicaceae</taxon>
        <taxon>Camelineae</taxon>
        <taxon>Arabidopsis</taxon>
    </lineage>
</organism>
<evidence type="ECO:0000255" key="1"/>
<evidence type="ECO:0000255" key="2">
    <source>
        <dbReference type="PROSITE-ProRule" id="PRU00215"/>
    </source>
</evidence>
<evidence type="ECO:0000256" key="3">
    <source>
        <dbReference type="SAM" id="MobiDB-lite"/>
    </source>
</evidence>
<evidence type="ECO:0000303" key="4">
    <source ref="4"/>
</evidence>
<evidence type="ECO:0000305" key="5"/>
<evidence type="ECO:0000312" key="6">
    <source>
        <dbReference type="Araport" id="AT4G10790"/>
    </source>
</evidence>
<evidence type="ECO:0000312" key="7">
    <source>
        <dbReference type="EMBL" id="AAC35520.1"/>
    </source>
</evidence>
<feature type="chain" id="PRO_0000432608" description="Plant UBX domain-containing protein 10">
    <location>
        <begin position="1"/>
        <end position="480"/>
    </location>
</feature>
<feature type="domain" description="UBX" evidence="2">
    <location>
        <begin position="399"/>
        <end position="477"/>
    </location>
</feature>
<feature type="region of interest" description="Disordered" evidence="3">
    <location>
        <begin position="47"/>
        <end position="78"/>
    </location>
</feature>
<feature type="region of interest" description="Disordered" evidence="3">
    <location>
        <begin position="335"/>
        <end position="383"/>
    </location>
</feature>
<feature type="coiled-coil region" evidence="1">
    <location>
        <begin position="330"/>
        <end position="389"/>
    </location>
</feature>
<feature type="compositionally biased region" description="Basic and acidic residues" evidence="3">
    <location>
        <begin position="336"/>
        <end position="383"/>
    </location>
</feature>
<dbReference type="EMBL" id="AF080119">
    <property type="protein sequence ID" value="AAC35520.1"/>
    <property type="status" value="ALT_SEQ"/>
    <property type="molecule type" value="Genomic_DNA"/>
</dbReference>
<dbReference type="EMBL" id="AL161518">
    <property type="protein sequence ID" value="CAB81180.1"/>
    <property type="molecule type" value="Genomic_DNA"/>
</dbReference>
<dbReference type="EMBL" id="CP002687">
    <property type="protein sequence ID" value="AEE82929.1"/>
    <property type="molecule type" value="Genomic_DNA"/>
</dbReference>
<dbReference type="EMBL" id="AK176682">
    <property type="protein sequence ID" value="BAD44445.1"/>
    <property type="molecule type" value="mRNA"/>
</dbReference>
<dbReference type="PIR" id="H85112">
    <property type="entry name" value="H85112"/>
</dbReference>
<dbReference type="PIR" id="T01898">
    <property type="entry name" value="T01898"/>
</dbReference>
<dbReference type="RefSeq" id="NP_192817.1">
    <property type="nucleotide sequence ID" value="NM_117147.4"/>
</dbReference>
<dbReference type="SMR" id="Q9M0N1"/>
<dbReference type="FunCoup" id="Q9M0N1">
    <property type="interactions" value="4437"/>
</dbReference>
<dbReference type="STRING" id="3702.Q9M0N1"/>
<dbReference type="TCDB" id="3.A.16.1.5">
    <property type="family name" value="the endoplasmic reticular retrotranslocon (er-rt) family"/>
</dbReference>
<dbReference type="PaxDb" id="3702-AT4G10790.1"/>
<dbReference type="ProteomicsDB" id="224799"/>
<dbReference type="EnsemblPlants" id="AT4G10790.1">
    <property type="protein sequence ID" value="AT4G10790.1"/>
    <property type="gene ID" value="AT4G10790"/>
</dbReference>
<dbReference type="GeneID" id="826675"/>
<dbReference type="Gramene" id="AT4G10790.1">
    <property type="protein sequence ID" value="AT4G10790.1"/>
    <property type="gene ID" value="AT4G10790"/>
</dbReference>
<dbReference type="KEGG" id="ath:AT4G10790"/>
<dbReference type="Araport" id="AT4G10790"/>
<dbReference type="TAIR" id="AT4G10790">
    <property type="gene designation" value="PUX10"/>
</dbReference>
<dbReference type="eggNOG" id="KOG1363">
    <property type="taxonomic scope" value="Eukaryota"/>
</dbReference>
<dbReference type="HOGENOM" id="CLU_047924_2_0_1"/>
<dbReference type="InParanoid" id="Q9M0N1"/>
<dbReference type="OMA" id="ILIRHQW"/>
<dbReference type="PhylomeDB" id="Q9M0N1"/>
<dbReference type="CD-CODE" id="4299E36E">
    <property type="entry name" value="Nucleolus"/>
</dbReference>
<dbReference type="PRO" id="PR:Q9M0N1"/>
<dbReference type="Proteomes" id="UP000006548">
    <property type="component" value="Chromosome 4"/>
</dbReference>
<dbReference type="ExpressionAtlas" id="Q9M0N1">
    <property type="expression patterns" value="baseline and differential"/>
</dbReference>
<dbReference type="GO" id="GO:0009941">
    <property type="term" value="C:chloroplast envelope"/>
    <property type="evidence" value="ECO:0000314"/>
    <property type="project" value="TAIR"/>
</dbReference>
<dbReference type="GO" id="GO:0005783">
    <property type="term" value="C:endoplasmic reticulum"/>
    <property type="evidence" value="ECO:0000314"/>
    <property type="project" value="TAIR"/>
</dbReference>
<dbReference type="GO" id="GO:0005811">
    <property type="term" value="C:lipid droplet"/>
    <property type="evidence" value="ECO:0000314"/>
    <property type="project" value="TAIR"/>
</dbReference>
<dbReference type="GO" id="GO:0005886">
    <property type="term" value="C:plasma membrane"/>
    <property type="evidence" value="ECO:0007005"/>
    <property type="project" value="TAIR"/>
</dbReference>
<dbReference type="GO" id="GO:0030674">
    <property type="term" value="F:protein-macromolecule adaptor activity"/>
    <property type="evidence" value="ECO:0000314"/>
    <property type="project" value="TAIR"/>
</dbReference>
<dbReference type="GO" id="GO:0043130">
    <property type="term" value="F:ubiquitin binding"/>
    <property type="evidence" value="ECO:0000314"/>
    <property type="project" value="TAIR"/>
</dbReference>
<dbReference type="GO" id="GO:1905691">
    <property type="term" value="P:lipid droplet disassembly"/>
    <property type="evidence" value="ECO:0000315"/>
    <property type="project" value="TAIR"/>
</dbReference>
<dbReference type="CDD" id="cd02958">
    <property type="entry name" value="UAS"/>
    <property type="match status" value="1"/>
</dbReference>
<dbReference type="CDD" id="cd14353">
    <property type="entry name" value="UBA_FAF"/>
    <property type="match status" value="1"/>
</dbReference>
<dbReference type="CDD" id="cd01767">
    <property type="entry name" value="UBX"/>
    <property type="match status" value="1"/>
</dbReference>
<dbReference type="Gene3D" id="1.10.8.10">
    <property type="entry name" value="DNA helicase RuvA subunit, C-terminal domain"/>
    <property type="match status" value="1"/>
</dbReference>
<dbReference type="Gene3D" id="3.40.30.10">
    <property type="entry name" value="Glutaredoxin"/>
    <property type="match status" value="1"/>
</dbReference>
<dbReference type="Gene3D" id="3.10.20.90">
    <property type="entry name" value="Phosphatidylinositol 3-kinase Catalytic Subunit, Chain A, domain 1"/>
    <property type="match status" value="1"/>
</dbReference>
<dbReference type="InterPro" id="IPR049483">
    <property type="entry name" value="FAF1_2-like_UAS"/>
</dbReference>
<dbReference type="InterPro" id="IPR036249">
    <property type="entry name" value="Thioredoxin-like_sf"/>
</dbReference>
<dbReference type="InterPro" id="IPR006577">
    <property type="entry name" value="UAS"/>
</dbReference>
<dbReference type="InterPro" id="IPR029071">
    <property type="entry name" value="Ubiquitin-like_domsf"/>
</dbReference>
<dbReference type="InterPro" id="IPR001012">
    <property type="entry name" value="UBX_dom"/>
</dbReference>
<dbReference type="InterPro" id="IPR050730">
    <property type="entry name" value="UBX_domain-protein"/>
</dbReference>
<dbReference type="PANTHER" id="PTHR23322:SF1">
    <property type="entry name" value="FAS-ASSOCIATED FACTOR 2"/>
    <property type="match status" value="1"/>
</dbReference>
<dbReference type="PANTHER" id="PTHR23322">
    <property type="entry name" value="FAS-ASSOCIATED PROTEIN"/>
    <property type="match status" value="1"/>
</dbReference>
<dbReference type="Pfam" id="PF21021">
    <property type="entry name" value="FAF1"/>
    <property type="match status" value="1"/>
</dbReference>
<dbReference type="Pfam" id="PF14555">
    <property type="entry name" value="UBA_4"/>
    <property type="match status" value="1"/>
</dbReference>
<dbReference type="Pfam" id="PF00789">
    <property type="entry name" value="UBX"/>
    <property type="match status" value="1"/>
</dbReference>
<dbReference type="SMART" id="SM00594">
    <property type="entry name" value="UAS"/>
    <property type="match status" value="1"/>
</dbReference>
<dbReference type="SMART" id="SM00166">
    <property type="entry name" value="UBX"/>
    <property type="match status" value="1"/>
</dbReference>
<dbReference type="SUPFAM" id="SSF52833">
    <property type="entry name" value="Thioredoxin-like"/>
    <property type="match status" value="1"/>
</dbReference>
<dbReference type="SUPFAM" id="SSF54236">
    <property type="entry name" value="Ubiquitin-like"/>
    <property type="match status" value="1"/>
</dbReference>
<dbReference type="PROSITE" id="PS50033">
    <property type="entry name" value="UBX"/>
    <property type="match status" value="1"/>
</dbReference>
<sequence length="480" mass="52803">MVDTVDKLGYFQAITGLEDADLCTEILQAHGWDLELAISSFTSSDQDASSSAVDGGGNNRDHDHNNATVTPDYPPRGIVDDTELVMRDDGGGNRGPGVAWRIITLPISIVSGSLGLVSGAIGLGIWAAGGVLSYSLGMLGFRSGRGGGSESARLVSVSSAVGEAMEFVALFDRDYGSNNAFKIDFVVEGFMDALQRSRSSFKLLFVYLHSPDHPDTPVFCGGTLCNEAVVAFVNENFVSWGGSIRSSEGFKMSNSLKASRFPFCAVVMPAANQRIALLQQVEGPKSPEEMLAILQRIVEDSSPTLVTARVEAEERRTNLRLREEQDAAYRAALEADQAREQQRQEEKERLEREAAEAERKLKEEEEARERAAREAEERQAARVRMRQEKALALGEEPEKGPDVTQVLVRFPNGERKGRMFKSETKIQTLYDYVDSLGLLDTEEYSLITNFPRTVYGRDKESMSLKDAGLHPQASLFIEIN</sequence>
<keyword id="KW-0175">Coiled coil</keyword>
<keyword id="KW-1185">Reference proteome</keyword>
<keyword id="KW-0833">Ubl conjugation pathway</keyword>
<comment type="sequence caution" evidence="5">
    <conflict type="erroneous gene model prediction">
        <sequence resource="EMBL-CDS" id="AAC35520"/>
    </conflict>
</comment>
<gene>
    <name evidence="4" type="primary">PUX10</name>
    <name evidence="6" type="ordered locus">At4g10790</name>
    <name evidence="7" type="ORF">T12H20.9</name>
</gene>
<proteinExistence type="evidence at transcript level"/>
<accession>Q9M0N1</accession>
<accession>O82483</accession>
<accession>Q67XY6</accession>
<reference key="1">
    <citation type="journal article" date="1999" name="Nature">
        <title>Sequence and analysis of chromosome 4 of the plant Arabidopsis thaliana.</title>
        <authorList>
            <person name="Mayer K.F.X."/>
            <person name="Schueller C."/>
            <person name="Wambutt R."/>
            <person name="Murphy G."/>
            <person name="Volckaert G."/>
            <person name="Pohl T."/>
            <person name="Duesterhoeft A."/>
            <person name="Stiekema W."/>
            <person name="Entian K.-D."/>
            <person name="Terryn N."/>
            <person name="Harris B."/>
            <person name="Ansorge W."/>
            <person name="Brandt P."/>
            <person name="Grivell L.A."/>
            <person name="Rieger M."/>
            <person name="Weichselgartner M."/>
            <person name="de Simone V."/>
            <person name="Obermaier B."/>
            <person name="Mache R."/>
            <person name="Mueller M."/>
            <person name="Kreis M."/>
            <person name="Delseny M."/>
            <person name="Puigdomenech P."/>
            <person name="Watson M."/>
            <person name="Schmidtheini T."/>
            <person name="Reichert B."/>
            <person name="Portetelle D."/>
            <person name="Perez-Alonso M."/>
            <person name="Boutry M."/>
            <person name="Bancroft I."/>
            <person name="Vos P."/>
            <person name="Hoheisel J."/>
            <person name="Zimmermann W."/>
            <person name="Wedler H."/>
            <person name="Ridley P."/>
            <person name="Langham S.-A."/>
            <person name="McCullagh B."/>
            <person name="Bilham L."/>
            <person name="Robben J."/>
            <person name="van der Schueren J."/>
            <person name="Grymonprez B."/>
            <person name="Chuang Y.-J."/>
            <person name="Vandenbussche F."/>
            <person name="Braeken M."/>
            <person name="Weltjens I."/>
            <person name="Voet M."/>
            <person name="Bastiaens I."/>
            <person name="Aert R."/>
            <person name="Defoor E."/>
            <person name="Weitzenegger T."/>
            <person name="Bothe G."/>
            <person name="Ramsperger U."/>
            <person name="Hilbert H."/>
            <person name="Braun M."/>
            <person name="Holzer E."/>
            <person name="Brandt A."/>
            <person name="Peters S."/>
            <person name="van Staveren M."/>
            <person name="Dirkse W."/>
            <person name="Mooijman P."/>
            <person name="Klein Lankhorst R."/>
            <person name="Rose M."/>
            <person name="Hauf J."/>
            <person name="Koetter P."/>
            <person name="Berneiser S."/>
            <person name="Hempel S."/>
            <person name="Feldpausch M."/>
            <person name="Lamberth S."/>
            <person name="Van den Daele H."/>
            <person name="De Keyser A."/>
            <person name="Buysshaert C."/>
            <person name="Gielen J."/>
            <person name="Villarroel R."/>
            <person name="De Clercq R."/>
            <person name="van Montagu M."/>
            <person name="Rogers J."/>
            <person name="Cronin A."/>
            <person name="Quail M.A."/>
            <person name="Bray-Allen S."/>
            <person name="Clark L."/>
            <person name="Doggett J."/>
            <person name="Hall S."/>
            <person name="Kay M."/>
            <person name="Lennard N."/>
            <person name="McLay K."/>
            <person name="Mayes R."/>
            <person name="Pettett A."/>
            <person name="Rajandream M.A."/>
            <person name="Lyne M."/>
            <person name="Benes V."/>
            <person name="Rechmann S."/>
            <person name="Borkova D."/>
            <person name="Bloecker H."/>
            <person name="Scharfe M."/>
            <person name="Grimm M."/>
            <person name="Loehnert T.-H."/>
            <person name="Dose S."/>
            <person name="de Haan M."/>
            <person name="Maarse A.C."/>
            <person name="Schaefer M."/>
            <person name="Mueller-Auer S."/>
            <person name="Gabel C."/>
            <person name="Fuchs M."/>
            <person name="Fartmann B."/>
            <person name="Granderath K."/>
            <person name="Dauner D."/>
            <person name="Herzl A."/>
            <person name="Neumann S."/>
            <person name="Argiriou A."/>
            <person name="Vitale D."/>
            <person name="Liguori R."/>
            <person name="Piravandi E."/>
            <person name="Massenet O."/>
            <person name="Quigley F."/>
            <person name="Clabauld G."/>
            <person name="Muendlein A."/>
            <person name="Felber R."/>
            <person name="Schnabl S."/>
            <person name="Hiller R."/>
            <person name="Schmidt W."/>
            <person name="Lecharny A."/>
            <person name="Aubourg S."/>
            <person name="Chefdor F."/>
            <person name="Cooke R."/>
            <person name="Berger C."/>
            <person name="Monfort A."/>
            <person name="Casacuberta E."/>
            <person name="Gibbons T."/>
            <person name="Weber N."/>
            <person name="Vandenbol M."/>
            <person name="Bargues M."/>
            <person name="Terol J."/>
            <person name="Torres A."/>
            <person name="Perez-Perez A."/>
            <person name="Purnelle B."/>
            <person name="Bent E."/>
            <person name="Johnson S."/>
            <person name="Tacon D."/>
            <person name="Jesse T."/>
            <person name="Heijnen L."/>
            <person name="Schwarz S."/>
            <person name="Scholler P."/>
            <person name="Heber S."/>
            <person name="Francs P."/>
            <person name="Bielke C."/>
            <person name="Frishman D."/>
            <person name="Haase D."/>
            <person name="Lemcke K."/>
            <person name="Mewes H.-W."/>
            <person name="Stocker S."/>
            <person name="Zaccaria P."/>
            <person name="Bevan M."/>
            <person name="Wilson R.K."/>
            <person name="de la Bastide M."/>
            <person name="Habermann K."/>
            <person name="Parnell L."/>
            <person name="Dedhia N."/>
            <person name="Gnoj L."/>
            <person name="Schutz K."/>
            <person name="Huang E."/>
            <person name="Spiegel L."/>
            <person name="Sekhon M."/>
            <person name="Murray J."/>
            <person name="Sheet P."/>
            <person name="Cordes M."/>
            <person name="Abu-Threideh J."/>
            <person name="Stoneking T."/>
            <person name="Kalicki J."/>
            <person name="Graves T."/>
            <person name="Harmon G."/>
            <person name="Edwards J."/>
            <person name="Latreille P."/>
            <person name="Courtney L."/>
            <person name="Cloud J."/>
            <person name="Abbott A."/>
            <person name="Scott K."/>
            <person name="Johnson D."/>
            <person name="Minx P."/>
            <person name="Bentley D."/>
            <person name="Fulton B."/>
            <person name="Miller N."/>
            <person name="Greco T."/>
            <person name="Kemp K."/>
            <person name="Kramer J."/>
            <person name="Fulton L."/>
            <person name="Mardis E."/>
            <person name="Dante M."/>
            <person name="Pepin K."/>
            <person name="Hillier L.W."/>
            <person name="Nelson J."/>
            <person name="Spieth J."/>
            <person name="Ryan E."/>
            <person name="Andrews S."/>
            <person name="Geisel C."/>
            <person name="Layman D."/>
            <person name="Du H."/>
            <person name="Ali J."/>
            <person name="Berghoff A."/>
            <person name="Jones K."/>
            <person name="Drone K."/>
            <person name="Cotton M."/>
            <person name="Joshu C."/>
            <person name="Antonoiu B."/>
            <person name="Zidanic M."/>
            <person name="Strong C."/>
            <person name="Sun H."/>
            <person name="Lamar B."/>
            <person name="Yordan C."/>
            <person name="Ma P."/>
            <person name="Zhong J."/>
            <person name="Preston R."/>
            <person name="Vil D."/>
            <person name="Shekher M."/>
            <person name="Matero A."/>
            <person name="Shah R."/>
            <person name="Swaby I.K."/>
            <person name="O'Shaughnessy A."/>
            <person name="Rodriguez M."/>
            <person name="Hoffman J."/>
            <person name="Till S."/>
            <person name="Granat S."/>
            <person name="Shohdy N."/>
            <person name="Hasegawa A."/>
            <person name="Hameed A."/>
            <person name="Lodhi M."/>
            <person name="Johnson A."/>
            <person name="Chen E."/>
            <person name="Marra M.A."/>
            <person name="Martienssen R."/>
            <person name="McCombie W.R."/>
        </authorList>
    </citation>
    <scope>NUCLEOTIDE SEQUENCE [LARGE SCALE GENOMIC DNA]</scope>
    <source>
        <strain>cv. Columbia</strain>
    </source>
</reference>
<reference key="2">
    <citation type="journal article" date="2017" name="Plant J.">
        <title>Araport11: a complete reannotation of the Arabidopsis thaliana reference genome.</title>
        <authorList>
            <person name="Cheng C.Y."/>
            <person name="Krishnakumar V."/>
            <person name="Chan A.P."/>
            <person name="Thibaud-Nissen F."/>
            <person name="Schobel S."/>
            <person name="Town C.D."/>
        </authorList>
    </citation>
    <scope>GENOME REANNOTATION</scope>
    <source>
        <strain>cv. Columbia</strain>
    </source>
</reference>
<reference key="3">
    <citation type="submission" date="2004-09" db="EMBL/GenBank/DDBJ databases">
        <title>Large-scale analysis of RIKEN Arabidopsis full-length (RAFL) cDNAs.</title>
        <authorList>
            <person name="Totoki Y."/>
            <person name="Seki M."/>
            <person name="Ishida J."/>
            <person name="Nakajima M."/>
            <person name="Enju A."/>
            <person name="Kamiya A."/>
            <person name="Narusaka M."/>
            <person name="Shin-i T."/>
            <person name="Nakagawa M."/>
            <person name="Sakamoto N."/>
            <person name="Oishi K."/>
            <person name="Kohara Y."/>
            <person name="Kobayashi M."/>
            <person name="Toyoda A."/>
            <person name="Sakaki Y."/>
            <person name="Sakurai T."/>
            <person name="Iida K."/>
            <person name="Akiyama K."/>
            <person name="Satou M."/>
            <person name="Toyoda T."/>
            <person name="Konagaya A."/>
            <person name="Carninci P."/>
            <person name="Kawai J."/>
            <person name="Hayashizaki Y."/>
            <person name="Shinozaki K."/>
        </authorList>
    </citation>
    <scope>NUCLEOTIDE SEQUENCE [LARGE SCALE MRNA] OF 185-480</scope>
    <source>
        <strain>cv. Columbia</strain>
    </source>
</reference>
<reference key="4">
    <citation type="book" date="2005" name="Proceedings of the 16th international conference on Arabidopsis research">
        <title>The plant UBX-domain containing (PUX) protein family regulates the function of Arabidopsis CDC48, a conserved essential AAA-ATPase.</title>
        <authorList>
            <person name="Posthuma R."/>
            <person name="Rancour D."/>
            <person name="Park S."/>
            <person name="Bates B."/>
            <person name="Bednarek S."/>
        </authorList>
    </citation>
    <scope>GENE FAMILY</scope>
</reference>
<name>PUX10_ARATH</name>